<sequence>MFNSFGNIFRLTSFGESHGKGIGGVIDGFPAGIVIDEEFVQQELNRRRPGQSVITTSRKEADKVEFLSGIFEGKSTGCPIGFIVWNENQHSNDYNNLEKVYRPSHADYTYTVKYGIRDHRGGGRSSARETISRVVGGALAKLALRQLGIHITAYTSQVGPIKLEGNYTDYDLDLIETNPVRCPDPEKAKEMQDLIYKIKGEGDTIGGVLTCVIKGCPIGLGQPVYGKLHAALGNAMLSINAAKAFEYGDGFKGLKQKGSEQNDVFYNNNGRIETRTNHSGGIQGGISNGQDIFFRVAFKPVATVLMEQETVNIDGIDTTLKARGRHDPCVLPRAVPIVEAMAAMTILDYYLLDRMTQL</sequence>
<feature type="chain" id="PRO_0000140547" description="Chorismate synthase">
    <location>
        <begin position="1"/>
        <end position="358"/>
    </location>
</feature>
<feature type="binding site" evidence="1">
    <location>
        <position position="47"/>
    </location>
    <ligand>
        <name>NADP(+)</name>
        <dbReference type="ChEBI" id="CHEBI:58349"/>
    </ligand>
</feature>
<feature type="binding site" evidence="1">
    <location>
        <begin position="124"/>
        <end position="126"/>
    </location>
    <ligand>
        <name>FMN</name>
        <dbReference type="ChEBI" id="CHEBI:58210"/>
    </ligand>
</feature>
<feature type="binding site" evidence="1">
    <location>
        <begin position="240"/>
        <end position="241"/>
    </location>
    <ligand>
        <name>FMN</name>
        <dbReference type="ChEBI" id="CHEBI:58210"/>
    </ligand>
</feature>
<feature type="binding site" evidence="1">
    <location>
        <position position="284"/>
    </location>
    <ligand>
        <name>FMN</name>
        <dbReference type="ChEBI" id="CHEBI:58210"/>
    </ligand>
</feature>
<feature type="binding site" evidence="1">
    <location>
        <begin position="299"/>
        <end position="303"/>
    </location>
    <ligand>
        <name>FMN</name>
        <dbReference type="ChEBI" id="CHEBI:58210"/>
    </ligand>
</feature>
<feature type="binding site" evidence="1">
    <location>
        <position position="325"/>
    </location>
    <ligand>
        <name>FMN</name>
        <dbReference type="ChEBI" id="CHEBI:58210"/>
    </ligand>
</feature>
<accession>Q64PP7</accession>
<reference key="1">
    <citation type="journal article" date="2004" name="Proc. Natl. Acad. Sci. U.S.A.">
        <title>Genomic analysis of Bacteroides fragilis reveals extensive DNA inversions regulating cell surface adaptation.</title>
        <authorList>
            <person name="Kuwahara T."/>
            <person name="Yamashita A."/>
            <person name="Hirakawa H."/>
            <person name="Nakayama H."/>
            <person name="Toh H."/>
            <person name="Okada N."/>
            <person name="Kuhara S."/>
            <person name="Hattori M."/>
            <person name="Hayashi T."/>
            <person name="Ohnishi Y."/>
        </authorList>
    </citation>
    <scope>NUCLEOTIDE SEQUENCE [LARGE SCALE GENOMIC DNA]</scope>
    <source>
        <strain>YCH46</strain>
    </source>
</reference>
<comment type="function">
    <text evidence="1">Catalyzes the anti-1,4-elimination of the C-3 phosphate and the C-6 proR hydrogen from 5-enolpyruvylshikimate-3-phosphate (EPSP) to yield chorismate, which is the branch point compound that serves as the starting substrate for the three terminal pathways of aromatic amino acid biosynthesis. This reaction introduces a second double bond into the aromatic ring system.</text>
</comment>
<comment type="catalytic activity">
    <reaction evidence="1">
        <text>5-O-(1-carboxyvinyl)-3-phosphoshikimate = chorismate + phosphate</text>
        <dbReference type="Rhea" id="RHEA:21020"/>
        <dbReference type="ChEBI" id="CHEBI:29748"/>
        <dbReference type="ChEBI" id="CHEBI:43474"/>
        <dbReference type="ChEBI" id="CHEBI:57701"/>
        <dbReference type="EC" id="4.2.3.5"/>
    </reaction>
</comment>
<comment type="cofactor">
    <cofactor evidence="1">
        <name>FMNH2</name>
        <dbReference type="ChEBI" id="CHEBI:57618"/>
    </cofactor>
    <text evidence="1">Reduced FMN (FMNH(2)).</text>
</comment>
<comment type="pathway">
    <text evidence="1">Metabolic intermediate biosynthesis; chorismate biosynthesis; chorismate from D-erythrose 4-phosphate and phosphoenolpyruvate: step 7/7.</text>
</comment>
<comment type="subunit">
    <text evidence="1">Homotetramer.</text>
</comment>
<comment type="similarity">
    <text evidence="1">Belongs to the chorismate synthase family.</text>
</comment>
<dbReference type="EC" id="4.2.3.5" evidence="1"/>
<dbReference type="EMBL" id="AP006841">
    <property type="protein sequence ID" value="BAD50534.1"/>
    <property type="molecule type" value="Genomic_DNA"/>
</dbReference>
<dbReference type="RefSeq" id="WP_005802245.1">
    <property type="nucleotide sequence ID" value="NZ_UYXF01000024.1"/>
</dbReference>
<dbReference type="RefSeq" id="YP_101068.1">
    <property type="nucleotide sequence ID" value="NC_006347.1"/>
</dbReference>
<dbReference type="SMR" id="Q64PP7"/>
<dbReference type="STRING" id="295405.BF3792"/>
<dbReference type="KEGG" id="bfr:BF3792"/>
<dbReference type="PATRIC" id="fig|295405.11.peg.3640"/>
<dbReference type="HOGENOM" id="CLU_034547_0_2_10"/>
<dbReference type="OrthoDB" id="9771806at2"/>
<dbReference type="UniPathway" id="UPA00053">
    <property type="reaction ID" value="UER00090"/>
</dbReference>
<dbReference type="Proteomes" id="UP000002197">
    <property type="component" value="Chromosome"/>
</dbReference>
<dbReference type="GO" id="GO:0005829">
    <property type="term" value="C:cytosol"/>
    <property type="evidence" value="ECO:0007669"/>
    <property type="project" value="TreeGrafter"/>
</dbReference>
<dbReference type="GO" id="GO:0004107">
    <property type="term" value="F:chorismate synthase activity"/>
    <property type="evidence" value="ECO:0007669"/>
    <property type="project" value="UniProtKB-UniRule"/>
</dbReference>
<dbReference type="GO" id="GO:0010181">
    <property type="term" value="F:FMN binding"/>
    <property type="evidence" value="ECO:0007669"/>
    <property type="project" value="TreeGrafter"/>
</dbReference>
<dbReference type="GO" id="GO:0008652">
    <property type="term" value="P:amino acid biosynthetic process"/>
    <property type="evidence" value="ECO:0007669"/>
    <property type="project" value="UniProtKB-KW"/>
</dbReference>
<dbReference type="GO" id="GO:0009073">
    <property type="term" value="P:aromatic amino acid family biosynthetic process"/>
    <property type="evidence" value="ECO:0007669"/>
    <property type="project" value="UniProtKB-KW"/>
</dbReference>
<dbReference type="GO" id="GO:0009423">
    <property type="term" value="P:chorismate biosynthetic process"/>
    <property type="evidence" value="ECO:0007669"/>
    <property type="project" value="UniProtKB-UniRule"/>
</dbReference>
<dbReference type="CDD" id="cd07304">
    <property type="entry name" value="Chorismate_synthase"/>
    <property type="match status" value="1"/>
</dbReference>
<dbReference type="FunFam" id="3.60.150.10:FF:000003">
    <property type="entry name" value="Chorismate synthase"/>
    <property type="match status" value="1"/>
</dbReference>
<dbReference type="Gene3D" id="3.60.150.10">
    <property type="entry name" value="Chorismate synthase AroC"/>
    <property type="match status" value="1"/>
</dbReference>
<dbReference type="HAMAP" id="MF_00300">
    <property type="entry name" value="Chorismate_synth"/>
    <property type="match status" value="1"/>
</dbReference>
<dbReference type="InterPro" id="IPR000453">
    <property type="entry name" value="Chorismate_synth"/>
</dbReference>
<dbReference type="InterPro" id="IPR035904">
    <property type="entry name" value="Chorismate_synth_AroC_sf"/>
</dbReference>
<dbReference type="InterPro" id="IPR020541">
    <property type="entry name" value="Chorismate_synthase_CS"/>
</dbReference>
<dbReference type="NCBIfam" id="TIGR00033">
    <property type="entry name" value="aroC"/>
    <property type="match status" value="1"/>
</dbReference>
<dbReference type="NCBIfam" id="NF003793">
    <property type="entry name" value="PRK05382.1"/>
    <property type="match status" value="1"/>
</dbReference>
<dbReference type="PANTHER" id="PTHR21085">
    <property type="entry name" value="CHORISMATE SYNTHASE"/>
    <property type="match status" value="1"/>
</dbReference>
<dbReference type="PANTHER" id="PTHR21085:SF0">
    <property type="entry name" value="CHORISMATE SYNTHASE"/>
    <property type="match status" value="1"/>
</dbReference>
<dbReference type="Pfam" id="PF01264">
    <property type="entry name" value="Chorismate_synt"/>
    <property type="match status" value="1"/>
</dbReference>
<dbReference type="PIRSF" id="PIRSF001456">
    <property type="entry name" value="Chorismate_synth"/>
    <property type="match status" value="1"/>
</dbReference>
<dbReference type="SUPFAM" id="SSF103263">
    <property type="entry name" value="Chorismate synthase, AroC"/>
    <property type="match status" value="1"/>
</dbReference>
<dbReference type="PROSITE" id="PS00787">
    <property type="entry name" value="CHORISMATE_SYNTHASE_1"/>
    <property type="match status" value="1"/>
</dbReference>
<dbReference type="PROSITE" id="PS00788">
    <property type="entry name" value="CHORISMATE_SYNTHASE_2"/>
    <property type="match status" value="1"/>
</dbReference>
<dbReference type="PROSITE" id="PS00789">
    <property type="entry name" value="CHORISMATE_SYNTHASE_3"/>
    <property type="match status" value="1"/>
</dbReference>
<name>AROC_BACFR</name>
<gene>
    <name evidence="1" type="primary">aroC</name>
    <name type="ordered locus">BF3792</name>
</gene>
<evidence type="ECO:0000255" key="1">
    <source>
        <dbReference type="HAMAP-Rule" id="MF_00300"/>
    </source>
</evidence>
<protein>
    <recommendedName>
        <fullName evidence="1">Chorismate synthase</fullName>
        <shortName evidence="1">CS</shortName>
        <ecNumber evidence="1">4.2.3.5</ecNumber>
    </recommendedName>
    <alternativeName>
        <fullName evidence="1">5-enolpyruvylshikimate-3-phosphate phospholyase</fullName>
    </alternativeName>
</protein>
<organism>
    <name type="scientific">Bacteroides fragilis (strain YCH46)</name>
    <dbReference type="NCBI Taxonomy" id="295405"/>
    <lineage>
        <taxon>Bacteria</taxon>
        <taxon>Pseudomonadati</taxon>
        <taxon>Bacteroidota</taxon>
        <taxon>Bacteroidia</taxon>
        <taxon>Bacteroidales</taxon>
        <taxon>Bacteroidaceae</taxon>
        <taxon>Bacteroides</taxon>
    </lineage>
</organism>
<proteinExistence type="inferred from homology"/>
<keyword id="KW-0028">Amino-acid biosynthesis</keyword>
<keyword id="KW-0057">Aromatic amino acid biosynthesis</keyword>
<keyword id="KW-0274">FAD</keyword>
<keyword id="KW-0285">Flavoprotein</keyword>
<keyword id="KW-0288">FMN</keyword>
<keyword id="KW-0456">Lyase</keyword>
<keyword id="KW-0521">NADP</keyword>